<protein>
    <recommendedName>
        <fullName evidence="1">FMN-dependent NADH:quinone oxidoreductase 6</fullName>
        <ecNumber evidence="1">1.6.5.-</ecNumber>
    </recommendedName>
    <alternativeName>
        <fullName evidence="1">Azo-dye reductase 6</fullName>
    </alternativeName>
    <alternativeName>
        <fullName evidence="1">FMN-dependent NADH-azo compound oxidoreductase 6</fullName>
    </alternativeName>
    <alternativeName>
        <fullName evidence="1">FMN-dependent NADH-azoreductase 6</fullName>
        <ecNumber evidence="1">1.7.1.17</ecNumber>
    </alternativeName>
</protein>
<dbReference type="EC" id="1.6.5.-" evidence="1"/>
<dbReference type="EC" id="1.7.1.17" evidence="1"/>
<dbReference type="EMBL" id="CP000151">
    <property type="protein sequence ID" value="ABB07216.1"/>
    <property type="molecule type" value="Genomic_DNA"/>
</dbReference>
<dbReference type="RefSeq" id="WP_011350811.1">
    <property type="nucleotide sequence ID" value="NZ_WNDV01000027.1"/>
</dbReference>
<dbReference type="SMR" id="Q39K00"/>
<dbReference type="GeneID" id="45093524"/>
<dbReference type="KEGG" id="bur:Bcep18194_A3615"/>
<dbReference type="PATRIC" id="fig|482957.22.peg.466"/>
<dbReference type="HOGENOM" id="CLU_088964_0_0_4"/>
<dbReference type="Proteomes" id="UP000002705">
    <property type="component" value="Chromosome 1"/>
</dbReference>
<dbReference type="GO" id="GO:0009055">
    <property type="term" value="F:electron transfer activity"/>
    <property type="evidence" value="ECO:0007669"/>
    <property type="project" value="UniProtKB-UniRule"/>
</dbReference>
<dbReference type="GO" id="GO:0010181">
    <property type="term" value="F:FMN binding"/>
    <property type="evidence" value="ECO:0007669"/>
    <property type="project" value="UniProtKB-UniRule"/>
</dbReference>
<dbReference type="GO" id="GO:0016652">
    <property type="term" value="F:oxidoreductase activity, acting on NAD(P)H as acceptor"/>
    <property type="evidence" value="ECO:0007669"/>
    <property type="project" value="UniProtKB-UniRule"/>
</dbReference>
<dbReference type="GO" id="GO:0016655">
    <property type="term" value="F:oxidoreductase activity, acting on NAD(P)H, quinone or similar compound as acceptor"/>
    <property type="evidence" value="ECO:0007669"/>
    <property type="project" value="InterPro"/>
</dbReference>
<dbReference type="Gene3D" id="3.40.50.360">
    <property type="match status" value="1"/>
</dbReference>
<dbReference type="HAMAP" id="MF_01216">
    <property type="entry name" value="Azoreductase_type1"/>
    <property type="match status" value="1"/>
</dbReference>
<dbReference type="InterPro" id="IPR003680">
    <property type="entry name" value="Flavodoxin_fold"/>
</dbReference>
<dbReference type="InterPro" id="IPR029039">
    <property type="entry name" value="Flavoprotein-like_sf"/>
</dbReference>
<dbReference type="InterPro" id="IPR050104">
    <property type="entry name" value="FMN-dep_NADH:Q_OxRdtase_AzoR1"/>
</dbReference>
<dbReference type="InterPro" id="IPR023048">
    <property type="entry name" value="NADH:quinone_OxRdtase_FMN_depd"/>
</dbReference>
<dbReference type="PANTHER" id="PTHR43741">
    <property type="entry name" value="FMN-DEPENDENT NADH-AZOREDUCTASE 1"/>
    <property type="match status" value="1"/>
</dbReference>
<dbReference type="PANTHER" id="PTHR43741:SF2">
    <property type="entry name" value="FMN-DEPENDENT NADH:QUINONE OXIDOREDUCTASE"/>
    <property type="match status" value="1"/>
</dbReference>
<dbReference type="Pfam" id="PF02525">
    <property type="entry name" value="Flavodoxin_2"/>
    <property type="match status" value="1"/>
</dbReference>
<dbReference type="SUPFAM" id="SSF52218">
    <property type="entry name" value="Flavoproteins"/>
    <property type="match status" value="1"/>
</dbReference>
<sequence length="198" mass="20899">MTTILQINSAARSQGAQSTLLANELTAKLQQSNPGAKVVVRDLLADALPHLDESVLGAFFTPADKRTAEQNAIVAKSDALIAELQAADVIVIGAPMYNFGISSQLKTYFDWIARAGVTFRYTENGPEGLIKGKKVHVVTARGGKYAGTPNDSQTPYLRTFLGFVGMTDVNFIFAEGLNLGPDAQSAALAGAREAIAAA</sequence>
<proteinExistence type="inferred from homology"/>
<name>AZOR6_BURL3</name>
<evidence type="ECO:0000255" key="1">
    <source>
        <dbReference type="HAMAP-Rule" id="MF_01216"/>
    </source>
</evidence>
<comment type="function">
    <text evidence="1">Quinone reductase that provides resistance to thiol-specific stress caused by electrophilic quinones.</text>
</comment>
<comment type="function">
    <text evidence="1">Also exhibits azoreductase activity. Catalyzes the reductive cleavage of the azo bond in aromatic azo compounds to the corresponding amines.</text>
</comment>
<comment type="catalytic activity">
    <reaction evidence="1">
        <text>2 a quinone + NADH + H(+) = 2 a 1,4-benzosemiquinone + NAD(+)</text>
        <dbReference type="Rhea" id="RHEA:65952"/>
        <dbReference type="ChEBI" id="CHEBI:15378"/>
        <dbReference type="ChEBI" id="CHEBI:57540"/>
        <dbReference type="ChEBI" id="CHEBI:57945"/>
        <dbReference type="ChEBI" id="CHEBI:132124"/>
        <dbReference type="ChEBI" id="CHEBI:134225"/>
    </reaction>
</comment>
<comment type="catalytic activity">
    <reaction evidence="1">
        <text>N,N-dimethyl-1,4-phenylenediamine + anthranilate + 2 NAD(+) = 2-(4-dimethylaminophenyl)diazenylbenzoate + 2 NADH + 2 H(+)</text>
        <dbReference type="Rhea" id="RHEA:55872"/>
        <dbReference type="ChEBI" id="CHEBI:15378"/>
        <dbReference type="ChEBI" id="CHEBI:15783"/>
        <dbReference type="ChEBI" id="CHEBI:16567"/>
        <dbReference type="ChEBI" id="CHEBI:57540"/>
        <dbReference type="ChEBI" id="CHEBI:57945"/>
        <dbReference type="ChEBI" id="CHEBI:71579"/>
        <dbReference type="EC" id="1.7.1.17"/>
    </reaction>
</comment>
<comment type="cofactor">
    <cofactor evidence="1">
        <name>FMN</name>
        <dbReference type="ChEBI" id="CHEBI:58210"/>
    </cofactor>
    <text evidence="1">Binds 1 FMN per subunit.</text>
</comment>
<comment type="subunit">
    <text evidence="1">Homodimer.</text>
</comment>
<comment type="similarity">
    <text evidence="1">Belongs to the azoreductase type 1 family.</text>
</comment>
<feature type="chain" id="PRO_0000245906" description="FMN-dependent NADH:quinone oxidoreductase 6">
    <location>
        <begin position="1"/>
        <end position="198"/>
    </location>
</feature>
<feature type="binding site" evidence="1">
    <location>
        <begin position="96"/>
        <end position="99"/>
    </location>
    <ligand>
        <name>FMN</name>
        <dbReference type="ChEBI" id="CHEBI:58210"/>
    </ligand>
</feature>
<accession>Q39K00</accession>
<gene>
    <name evidence="1" type="primary">azoR6</name>
    <name type="ordered locus">Bcep18194_A3615</name>
</gene>
<keyword id="KW-0285">Flavoprotein</keyword>
<keyword id="KW-0288">FMN</keyword>
<keyword id="KW-0520">NAD</keyword>
<keyword id="KW-0560">Oxidoreductase</keyword>
<organism>
    <name type="scientific">Burkholderia lata (strain ATCC 17760 / DSM 23089 / LMG 22485 / NCIMB 9086 / R18194 / 383)</name>
    <dbReference type="NCBI Taxonomy" id="482957"/>
    <lineage>
        <taxon>Bacteria</taxon>
        <taxon>Pseudomonadati</taxon>
        <taxon>Pseudomonadota</taxon>
        <taxon>Betaproteobacteria</taxon>
        <taxon>Burkholderiales</taxon>
        <taxon>Burkholderiaceae</taxon>
        <taxon>Burkholderia</taxon>
        <taxon>Burkholderia cepacia complex</taxon>
    </lineage>
</organism>
<reference key="1">
    <citation type="submission" date="2005-10" db="EMBL/GenBank/DDBJ databases">
        <title>Complete sequence of chromosome 1 of Burkholderia sp. 383.</title>
        <authorList>
            <consortium name="US DOE Joint Genome Institute"/>
            <person name="Copeland A."/>
            <person name="Lucas S."/>
            <person name="Lapidus A."/>
            <person name="Barry K."/>
            <person name="Detter J.C."/>
            <person name="Glavina T."/>
            <person name="Hammon N."/>
            <person name="Israni S."/>
            <person name="Pitluck S."/>
            <person name="Chain P."/>
            <person name="Malfatti S."/>
            <person name="Shin M."/>
            <person name="Vergez L."/>
            <person name="Schmutz J."/>
            <person name="Larimer F."/>
            <person name="Land M."/>
            <person name="Kyrpides N."/>
            <person name="Lykidis A."/>
            <person name="Richardson P."/>
        </authorList>
    </citation>
    <scope>NUCLEOTIDE SEQUENCE [LARGE SCALE GENOMIC DNA]</scope>
    <source>
        <strain>ATCC 17760 / DSM 23089 / LMG 22485 / NCIMB 9086 / R18194 / 383</strain>
    </source>
</reference>